<protein>
    <recommendedName>
        <fullName>Protein SPT2 homolog</fullName>
    </recommendedName>
    <alternativeName>
        <fullName>Protein KU002155</fullName>
    </alternativeName>
    <alternativeName>
        <fullName>SPT2 domain-containing protein 1</fullName>
    </alternativeName>
</protein>
<reference key="1">
    <citation type="journal article" date="2007" name="BMC Genomics">
        <title>The full-ORF clone resource of the German cDNA consortium.</title>
        <authorList>
            <person name="Bechtel S."/>
            <person name="Rosenfelder H."/>
            <person name="Duda A."/>
            <person name="Schmidt C.P."/>
            <person name="Ernst U."/>
            <person name="Wellenreuther R."/>
            <person name="Mehrle A."/>
            <person name="Schuster C."/>
            <person name="Bahr A."/>
            <person name="Bloecker H."/>
            <person name="Heubner D."/>
            <person name="Hoerlein A."/>
            <person name="Michel G."/>
            <person name="Wedler H."/>
            <person name="Koehrer K."/>
            <person name="Ottenwaelder B."/>
            <person name="Poustka A."/>
            <person name="Wiemann S."/>
            <person name="Schupp I."/>
        </authorList>
    </citation>
    <scope>NUCLEOTIDE SEQUENCE [LARGE SCALE MRNA] (ISOFORM 1)</scope>
    <scope>VARIANT ARG-617</scope>
    <source>
        <tissue>Amygdala</tissue>
        <tissue>Colon endothelium</tissue>
        <tissue>Salivary gland</tissue>
        <tissue>Testis</tissue>
    </source>
</reference>
<reference key="2">
    <citation type="journal article" date="2006" name="Nature">
        <title>Human chromosome 11 DNA sequence and analysis including novel gene identification.</title>
        <authorList>
            <person name="Taylor T.D."/>
            <person name="Noguchi H."/>
            <person name="Totoki Y."/>
            <person name="Toyoda A."/>
            <person name="Kuroki Y."/>
            <person name="Dewar K."/>
            <person name="Lloyd C."/>
            <person name="Itoh T."/>
            <person name="Takeda T."/>
            <person name="Kim D.-W."/>
            <person name="She X."/>
            <person name="Barlow K.F."/>
            <person name="Bloom T."/>
            <person name="Bruford E."/>
            <person name="Chang J.L."/>
            <person name="Cuomo C.A."/>
            <person name="Eichler E."/>
            <person name="FitzGerald M.G."/>
            <person name="Jaffe D.B."/>
            <person name="LaButti K."/>
            <person name="Nicol R."/>
            <person name="Park H.-S."/>
            <person name="Seaman C."/>
            <person name="Sougnez C."/>
            <person name="Yang X."/>
            <person name="Zimmer A.R."/>
            <person name="Zody M.C."/>
            <person name="Birren B.W."/>
            <person name="Nusbaum C."/>
            <person name="Fujiyama A."/>
            <person name="Hattori M."/>
            <person name="Rogers J."/>
            <person name="Lander E.S."/>
            <person name="Sakaki Y."/>
        </authorList>
    </citation>
    <scope>NUCLEOTIDE SEQUENCE [LARGE SCALE GENOMIC DNA]</scope>
</reference>
<reference key="3">
    <citation type="journal article" date="2004" name="Genome Res.">
        <title>The status, quality, and expansion of the NIH full-length cDNA project: the Mammalian Gene Collection (MGC).</title>
        <authorList>
            <consortium name="The MGC Project Team"/>
        </authorList>
    </citation>
    <scope>NUCLEOTIDE SEQUENCE [LARGE SCALE MRNA] (ISOFORM 3)</scope>
    <scope>NUCLEOTIDE SEQUENCE [LARGE SCALE MRNA] OF 389-685 (ISOFORM 1)</scope>
    <scope>VARIANT ARG-617</scope>
    <source>
        <tissue>Pancreas</tissue>
        <tissue>Testis</tissue>
    </source>
</reference>
<reference key="4">
    <citation type="journal article" date="2004" name="Nat. Genet.">
        <title>Complete sequencing and characterization of 21,243 full-length human cDNAs.</title>
        <authorList>
            <person name="Ota T."/>
            <person name="Suzuki Y."/>
            <person name="Nishikawa T."/>
            <person name="Otsuki T."/>
            <person name="Sugiyama T."/>
            <person name="Irie R."/>
            <person name="Wakamatsu A."/>
            <person name="Hayashi K."/>
            <person name="Sato H."/>
            <person name="Nagai K."/>
            <person name="Kimura K."/>
            <person name="Makita H."/>
            <person name="Sekine M."/>
            <person name="Obayashi M."/>
            <person name="Nishi T."/>
            <person name="Shibahara T."/>
            <person name="Tanaka T."/>
            <person name="Ishii S."/>
            <person name="Yamamoto J."/>
            <person name="Saito K."/>
            <person name="Kawai Y."/>
            <person name="Isono Y."/>
            <person name="Nakamura Y."/>
            <person name="Nagahari K."/>
            <person name="Murakami K."/>
            <person name="Yasuda T."/>
            <person name="Iwayanagi T."/>
            <person name="Wagatsuma M."/>
            <person name="Shiratori A."/>
            <person name="Sudo H."/>
            <person name="Hosoiri T."/>
            <person name="Kaku Y."/>
            <person name="Kodaira H."/>
            <person name="Kondo H."/>
            <person name="Sugawara M."/>
            <person name="Takahashi M."/>
            <person name="Kanda K."/>
            <person name="Yokoi T."/>
            <person name="Furuya T."/>
            <person name="Kikkawa E."/>
            <person name="Omura Y."/>
            <person name="Abe K."/>
            <person name="Kamihara K."/>
            <person name="Katsuta N."/>
            <person name="Sato K."/>
            <person name="Tanikawa M."/>
            <person name="Yamazaki M."/>
            <person name="Ninomiya K."/>
            <person name="Ishibashi T."/>
            <person name="Yamashita H."/>
            <person name="Murakawa K."/>
            <person name="Fujimori K."/>
            <person name="Tanai H."/>
            <person name="Kimata M."/>
            <person name="Watanabe M."/>
            <person name="Hiraoka S."/>
            <person name="Chiba Y."/>
            <person name="Ishida S."/>
            <person name="Ono Y."/>
            <person name="Takiguchi S."/>
            <person name="Watanabe S."/>
            <person name="Yosida M."/>
            <person name="Hotuta T."/>
            <person name="Kusano J."/>
            <person name="Kanehori K."/>
            <person name="Takahashi-Fujii A."/>
            <person name="Hara H."/>
            <person name="Tanase T.-O."/>
            <person name="Nomura Y."/>
            <person name="Togiya S."/>
            <person name="Komai F."/>
            <person name="Hara R."/>
            <person name="Takeuchi K."/>
            <person name="Arita M."/>
            <person name="Imose N."/>
            <person name="Musashino K."/>
            <person name="Yuuki H."/>
            <person name="Oshima A."/>
            <person name="Sasaki N."/>
            <person name="Aotsuka S."/>
            <person name="Yoshikawa Y."/>
            <person name="Matsunawa H."/>
            <person name="Ichihara T."/>
            <person name="Shiohata N."/>
            <person name="Sano S."/>
            <person name="Moriya S."/>
            <person name="Momiyama H."/>
            <person name="Satoh N."/>
            <person name="Takami S."/>
            <person name="Terashima Y."/>
            <person name="Suzuki O."/>
            <person name="Nakagawa S."/>
            <person name="Senoh A."/>
            <person name="Mizoguchi H."/>
            <person name="Goto Y."/>
            <person name="Shimizu F."/>
            <person name="Wakebe H."/>
            <person name="Hishigaki H."/>
            <person name="Watanabe T."/>
            <person name="Sugiyama A."/>
            <person name="Takemoto M."/>
            <person name="Kawakami B."/>
            <person name="Yamazaki M."/>
            <person name="Watanabe K."/>
            <person name="Kumagai A."/>
            <person name="Itakura S."/>
            <person name="Fukuzumi Y."/>
            <person name="Fujimori Y."/>
            <person name="Komiyama M."/>
            <person name="Tashiro H."/>
            <person name="Tanigami A."/>
            <person name="Fujiwara T."/>
            <person name="Ono T."/>
            <person name="Yamada K."/>
            <person name="Fujii Y."/>
            <person name="Ozaki K."/>
            <person name="Hirao M."/>
            <person name="Ohmori Y."/>
            <person name="Kawabata A."/>
            <person name="Hikiji T."/>
            <person name="Kobatake N."/>
            <person name="Inagaki H."/>
            <person name="Ikema Y."/>
            <person name="Okamoto S."/>
            <person name="Okitani R."/>
            <person name="Kawakami T."/>
            <person name="Noguchi S."/>
            <person name="Itoh T."/>
            <person name="Shigeta K."/>
            <person name="Senba T."/>
            <person name="Matsumura K."/>
            <person name="Nakajima Y."/>
            <person name="Mizuno T."/>
            <person name="Morinaga M."/>
            <person name="Sasaki M."/>
            <person name="Togashi T."/>
            <person name="Oyama M."/>
            <person name="Hata H."/>
            <person name="Watanabe M."/>
            <person name="Komatsu T."/>
            <person name="Mizushima-Sugano J."/>
            <person name="Satoh T."/>
            <person name="Shirai Y."/>
            <person name="Takahashi Y."/>
            <person name="Nakagawa K."/>
            <person name="Okumura K."/>
            <person name="Nagase T."/>
            <person name="Nomura N."/>
            <person name="Kikuchi H."/>
            <person name="Masuho Y."/>
            <person name="Yamashita R."/>
            <person name="Nakai K."/>
            <person name="Yada T."/>
            <person name="Nakamura Y."/>
            <person name="Ohara O."/>
            <person name="Isogai T."/>
            <person name="Sugano S."/>
        </authorList>
    </citation>
    <scope>NUCLEOTIDE SEQUENCE [LARGE SCALE MRNA] OF 1-627</scope>
    <source>
        <tissue>Prostate</tissue>
    </source>
</reference>
<reference key="5">
    <citation type="submission" date="2001-11" db="EMBL/GenBank/DDBJ databases">
        <authorList>
            <person name="Kim N.-S."/>
            <person name="Shon H.-Y."/>
            <person name="Oh J.-H."/>
            <person name="Lee J.-Y."/>
            <person name="Kim J.-M."/>
            <person name="Hahn Y."/>
            <person name="Park H.-S."/>
            <person name="Kim S."/>
            <person name="Kim Y.S."/>
        </authorList>
    </citation>
    <scope>NUCLEOTIDE SEQUENCE [MRNA] OF 131-685 (ISOFORM 2)</scope>
</reference>
<reference key="6">
    <citation type="journal article" date="2008" name="Proc. Natl. Acad. Sci. U.S.A.">
        <title>A quantitative atlas of mitotic phosphorylation.</title>
        <authorList>
            <person name="Dephoure N."/>
            <person name="Zhou C."/>
            <person name="Villen J."/>
            <person name="Beausoleil S.A."/>
            <person name="Bakalarski C.E."/>
            <person name="Elledge S.J."/>
            <person name="Gygi S.P."/>
        </authorList>
    </citation>
    <scope>PHOSPHORYLATION [LARGE SCALE ANALYSIS] AT SER-599</scope>
    <scope>IDENTIFICATION BY MASS SPECTROMETRY [LARGE SCALE ANALYSIS]</scope>
    <source>
        <tissue>Cervix carcinoma</tissue>
    </source>
</reference>
<reference key="7">
    <citation type="journal article" date="2009" name="Science">
        <title>Lysine acetylation targets protein complexes and co-regulates major cellular functions.</title>
        <authorList>
            <person name="Choudhary C."/>
            <person name="Kumar C."/>
            <person name="Gnad F."/>
            <person name="Nielsen M.L."/>
            <person name="Rehman M."/>
            <person name="Walther T.C."/>
            <person name="Olsen J.V."/>
            <person name="Mann M."/>
        </authorList>
    </citation>
    <scope>ACETYLATION [LARGE SCALE ANALYSIS] AT LYS-582</scope>
    <scope>IDENTIFICATION BY MASS SPECTROMETRY [LARGE SCALE ANALYSIS]</scope>
</reference>
<reference key="8">
    <citation type="journal article" date="2010" name="Sci. Signal.">
        <title>Quantitative phosphoproteomics reveals widespread full phosphorylation site occupancy during mitosis.</title>
        <authorList>
            <person name="Olsen J.V."/>
            <person name="Vermeulen M."/>
            <person name="Santamaria A."/>
            <person name="Kumar C."/>
            <person name="Miller M.L."/>
            <person name="Jensen L.J."/>
            <person name="Gnad F."/>
            <person name="Cox J."/>
            <person name="Jensen T.S."/>
            <person name="Nigg E.A."/>
            <person name="Brunak S."/>
            <person name="Mann M."/>
        </authorList>
    </citation>
    <scope>PHOSPHORYLATION [LARGE SCALE ANALYSIS] AT SER-278</scope>
    <scope>IDENTIFICATION BY MASS SPECTROMETRY [LARGE SCALE ANALYSIS]</scope>
    <source>
        <tissue>Cervix carcinoma</tissue>
    </source>
</reference>
<reference key="9">
    <citation type="journal article" date="2013" name="J. Cell Sci.">
        <title>Vertebrate Spt2 is a novel nucleolar histone chaperone that assists in ribosomal DNA transcription.</title>
        <authorList>
            <person name="Osakabe A."/>
            <person name="Tachiwana H."/>
            <person name="Takaku M."/>
            <person name="Hori T."/>
            <person name="Obuse C."/>
            <person name="Kimura H."/>
            <person name="Fukagawa T."/>
            <person name="Kurumizaka H."/>
        </authorList>
    </citation>
    <scope>FUNCTION</scope>
    <scope>SUBUNIT</scope>
    <scope>IDENTIFICATION BY MASS SPECTROMETRY</scope>
    <scope>DOMAIN</scope>
</reference>
<reference key="10">
    <citation type="journal article" date="2013" name="J. Proteome Res.">
        <title>Toward a comprehensive characterization of a human cancer cell phosphoproteome.</title>
        <authorList>
            <person name="Zhou H."/>
            <person name="Di Palma S."/>
            <person name="Preisinger C."/>
            <person name="Peng M."/>
            <person name="Polat A.N."/>
            <person name="Heck A.J."/>
            <person name="Mohammed S."/>
        </authorList>
    </citation>
    <scope>PHOSPHORYLATION [LARGE SCALE ANALYSIS] AT SER-471</scope>
    <scope>IDENTIFICATION BY MASS SPECTROMETRY [LARGE SCALE ANALYSIS]</scope>
    <source>
        <tissue>Cervix carcinoma</tissue>
        <tissue>Erythroleukemia</tissue>
    </source>
</reference>
<reference key="11">
    <citation type="journal article" date="2017" name="Nat. Struct. Mol. Biol.">
        <title>Site-specific mapping of the human SUMO proteome reveals co-modification with phosphorylation.</title>
        <authorList>
            <person name="Hendriks I.A."/>
            <person name="Lyon D."/>
            <person name="Young C."/>
            <person name="Jensen L.J."/>
            <person name="Vertegaal A.C."/>
            <person name="Nielsen M.L."/>
        </authorList>
    </citation>
    <scope>SUMOYLATION [LARGE SCALE ANALYSIS] AT LYS-37 AND LYS-187</scope>
    <scope>IDENTIFICATION BY MASS SPECTROMETRY [LARGE SCALE ANALYSIS]</scope>
</reference>
<reference key="12">
    <citation type="journal article" date="2021" name="Mol. Cell">
        <title>DNAJC9 integrates heat shock molecular chaperones into the histone chaperone network.</title>
        <authorList>
            <person name="Hammond C.M."/>
            <person name="Bao H."/>
            <person name="Hendriks I.A."/>
            <person name="Carraro M."/>
            <person name="Garcia-Nieto A."/>
            <person name="Liu Y."/>
            <person name="Reveron-Gomez N."/>
            <person name="Spanos C."/>
            <person name="Chen L."/>
            <person name="Rappsilber J."/>
            <person name="Nielsen M.L."/>
            <person name="Patel D.J."/>
            <person name="Huang H."/>
            <person name="Groth A."/>
        </authorList>
    </citation>
    <scope>INTERACTION WITH HISTONE H3.3</scope>
</reference>
<reference key="13">
    <citation type="journal article" date="2015" name="Genes Dev.">
        <title>Structure-function studies of histone H3/H4 tetramer maintenance during transcription by chaperone Spt2.</title>
        <authorList>
            <person name="Chen S."/>
            <person name="Rufiange A."/>
            <person name="Huang H."/>
            <person name="Rajashankar K.R."/>
            <person name="Nourani A."/>
            <person name="Patel D.J."/>
        </authorList>
    </citation>
    <scope>X-RAY CRYSTALLOGRAPHY (3.3 ANGSTROMS) OF 571-685 IN COMPLEX WITH HISTONE H3 AND H4</scope>
    <scope>FUNCTION</scope>
    <scope>SUBUNIT</scope>
    <scope>DOMAIN</scope>
    <scope>MUTAGENESIS OF MET-641; 651-GLU-GLU-652; 658-LEU-GLY-659 AND 662-GLU-ASP-663</scope>
</reference>
<feature type="chain" id="PRO_0000315736" description="Protein SPT2 homolog">
    <location>
        <begin position="1"/>
        <end position="685"/>
    </location>
</feature>
<feature type="region of interest" description="Important for interaction with DNA" evidence="6">
    <location>
        <begin position="1"/>
        <end position="570"/>
    </location>
</feature>
<feature type="region of interest" description="Disordered" evidence="3">
    <location>
        <begin position="79"/>
        <end position="168"/>
    </location>
</feature>
<feature type="region of interest" description="Disordered" evidence="3">
    <location>
        <begin position="188"/>
        <end position="615"/>
    </location>
</feature>
<feature type="region of interest" description="Important for interaction with histones" evidence="6">
    <location>
        <begin position="571"/>
        <end position="685"/>
    </location>
</feature>
<feature type="region of interest" description="Disordered" evidence="3">
    <location>
        <begin position="644"/>
        <end position="685"/>
    </location>
</feature>
<feature type="coiled-coil region" evidence="2">
    <location>
        <begin position="45"/>
        <end position="81"/>
    </location>
</feature>
<feature type="coiled-coil region" evidence="2">
    <location>
        <begin position="123"/>
        <end position="148"/>
    </location>
</feature>
<feature type="coiled-coil region" evidence="2">
    <location>
        <begin position="645"/>
        <end position="685"/>
    </location>
</feature>
<feature type="compositionally biased region" description="Basic and acidic residues" evidence="3">
    <location>
        <begin position="101"/>
        <end position="111"/>
    </location>
</feature>
<feature type="compositionally biased region" description="Basic and acidic residues" evidence="3">
    <location>
        <begin position="188"/>
        <end position="209"/>
    </location>
</feature>
<feature type="compositionally biased region" description="Basic and acidic residues" evidence="3">
    <location>
        <begin position="260"/>
        <end position="275"/>
    </location>
</feature>
<feature type="compositionally biased region" description="Low complexity" evidence="3">
    <location>
        <begin position="317"/>
        <end position="330"/>
    </location>
</feature>
<feature type="compositionally biased region" description="Low complexity" evidence="3">
    <location>
        <begin position="365"/>
        <end position="385"/>
    </location>
</feature>
<feature type="compositionally biased region" description="Low complexity" evidence="3">
    <location>
        <begin position="402"/>
        <end position="415"/>
    </location>
</feature>
<feature type="compositionally biased region" description="Polar residues" evidence="3">
    <location>
        <begin position="416"/>
        <end position="431"/>
    </location>
</feature>
<feature type="compositionally biased region" description="Low complexity" evidence="3">
    <location>
        <begin position="435"/>
        <end position="501"/>
    </location>
</feature>
<feature type="compositionally biased region" description="Polar residues" evidence="3">
    <location>
        <begin position="519"/>
        <end position="529"/>
    </location>
</feature>
<feature type="compositionally biased region" description="Low complexity" evidence="3">
    <location>
        <begin position="542"/>
        <end position="553"/>
    </location>
</feature>
<feature type="compositionally biased region" description="Acidic residues" evidence="3">
    <location>
        <begin position="587"/>
        <end position="613"/>
    </location>
</feature>
<feature type="compositionally biased region" description="Basic and acidic residues" evidence="3">
    <location>
        <begin position="644"/>
        <end position="655"/>
    </location>
</feature>
<feature type="compositionally biased region" description="Basic and acidic residues" evidence="3">
    <location>
        <begin position="666"/>
        <end position="676"/>
    </location>
</feature>
<feature type="modified residue" description="Phosphoserine" evidence="14">
    <location>
        <position position="278"/>
    </location>
</feature>
<feature type="modified residue" description="Phosphoserine" evidence="15">
    <location>
        <position position="471"/>
    </location>
</feature>
<feature type="modified residue" description="N6-acetyllysine" evidence="13">
    <location>
        <position position="582"/>
    </location>
</feature>
<feature type="modified residue" description="Phosphoserine" evidence="12">
    <location>
        <position position="599"/>
    </location>
</feature>
<feature type="cross-link" description="Glycyl lysine isopeptide (Lys-Gly) (interchain with G-Cter in SUMO2)" evidence="16">
    <location>
        <position position="37"/>
    </location>
</feature>
<feature type="cross-link" description="Glycyl lysine isopeptide (Lys-Gly) (interchain with G-Cter in SUMO2)" evidence="16">
    <location>
        <position position="187"/>
    </location>
</feature>
<feature type="splice variant" id="VSP_030688" description="In isoform 3." evidence="9">
    <location>
        <position position="106"/>
    </location>
</feature>
<feature type="splice variant" id="VSP_030689" description="In isoform 3." evidence="9">
    <original>SVPKTSASRTQKSAVEHKAKKSLSHPSHSRPGPMVTPHNKAKSPGVRQPGSSSSSAPGQPSTGVARPTVSSGPVPRRQNGSSSSGPERSISGSKKPTNDSNPSRRTVSGTCGPGQPASSSGGPGRPISGSVSSARPLGSSRGPGRPVSSPHELRRPVSGLGPPGRSVSGPGRSISGSIPAGRTVSNSVPGRPVSSLGPGQTVSSSGPTIKPKCTVVSETISSKNIISRSSNGQMNGMKPPLSGYRAAQGPQRLPFPTGYKRQREYEEEDDDDDEYDSEMEDFIEDEGEPQEEISKHIREIFGYDRKKYKDESDYALRYMESSWKEQQKEEAKSLRLGMQEDLEEMRREEEEMQRRRAKKLKRR</original>
    <variation>KHVWKENKYMKRDWLFYFQCIEYIRLLFIF</variation>
    <location>
        <begin position="323"/>
        <end position="685"/>
    </location>
</feature>
<feature type="splice variant" id="VSP_030690" description="In isoform 2." evidence="10">
    <location>
        <begin position="648"/>
        <end position="659"/>
    </location>
</feature>
<feature type="sequence variant" id="VAR_038298" description="In dbSNP:rs12795406.">
    <original>S</original>
    <variation>F</variation>
    <location>
        <position position="317"/>
    </location>
</feature>
<feature type="sequence variant" id="VAR_038299" description="In dbSNP:rs16935599.">
    <original>R</original>
    <variation>Q</variation>
    <location>
        <position position="447"/>
    </location>
</feature>
<feature type="sequence variant" id="VAR_038300" description="In dbSNP:rs35411689." evidence="4 5">
    <original>K</original>
    <variation>R</variation>
    <location>
        <position position="617"/>
    </location>
</feature>
<feature type="mutagenesis site" description="Strongly reduces affinity for histones." evidence="7">
    <original>M</original>
    <variation>A</variation>
    <location>
        <position position="641"/>
    </location>
</feature>
<feature type="mutagenesis site" description="Strongly reduces affinity for histones." evidence="7">
    <original>EE</original>
    <variation>AA</variation>
    <location>
        <begin position="651"/>
        <end position="652"/>
    </location>
</feature>
<feature type="mutagenesis site" description="Strongly reduces affinity for histones." evidence="7">
    <original>LG</original>
    <variation>AN</variation>
    <location>
        <begin position="658"/>
        <end position="659"/>
    </location>
</feature>
<feature type="mutagenesis site" description="Strongly reduces affinity for histones." evidence="7">
    <original>ED</original>
    <variation>AA</variation>
    <location>
        <begin position="662"/>
        <end position="663"/>
    </location>
</feature>
<feature type="sequence conflict" description="In Ref. 1; CAE46047." evidence="11" ref="1">
    <original>P</original>
    <variation>L</variation>
    <location>
        <position position="29"/>
    </location>
</feature>
<feature type="sequence conflict" description="In Ref. 1; CAE46047." evidence="11" ref="1">
    <original>P</original>
    <variation>Q</variation>
    <location>
        <position position="30"/>
    </location>
</feature>
<feature type="sequence conflict" description="In Ref. 1; CAE46047." evidence="11" ref="1">
    <original>R</original>
    <variation>Q</variation>
    <location>
        <position position="73"/>
    </location>
</feature>
<feature type="sequence conflict" description="In Ref. 1; CAE46047." evidence="11" ref="1">
    <original>E</original>
    <variation>G</variation>
    <location>
        <position position="122"/>
    </location>
</feature>
<feature type="helix" evidence="17">
    <location>
        <begin position="614"/>
        <end position="623"/>
    </location>
</feature>
<feature type="helix" evidence="17">
    <location>
        <begin position="636"/>
        <end position="639"/>
    </location>
</feature>
<feature type="helix" evidence="17">
    <location>
        <begin position="645"/>
        <end position="674"/>
    </location>
</feature>
<name>SPT2_HUMAN</name>
<organism>
    <name type="scientific">Homo sapiens</name>
    <name type="common">Human</name>
    <dbReference type="NCBI Taxonomy" id="9606"/>
    <lineage>
        <taxon>Eukaryota</taxon>
        <taxon>Metazoa</taxon>
        <taxon>Chordata</taxon>
        <taxon>Craniata</taxon>
        <taxon>Vertebrata</taxon>
        <taxon>Euteleostomi</taxon>
        <taxon>Mammalia</taxon>
        <taxon>Eutheria</taxon>
        <taxon>Euarchontoglires</taxon>
        <taxon>Primates</taxon>
        <taxon>Haplorrhini</taxon>
        <taxon>Catarrhini</taxon>
        <taxon>Hominidae</taxon>
        <taxon>Homo</taxon>
    </lineage>
</organism>
<evidence type="ECO:0000250" key="1">
    <source>
        <dbReference type="UniProtKB" id="E1BUG7"/>
    </source>
</evidence>
<evidence type="ECO:0000255" key="2"/>
<evidence type="ECO:0000256" key="3">
    <source>
        <dbReference type="SAM" id="MobiDB-lite"/>
    </source>
</evidence>
<evidence type="ECO:0000269" key="4">
    <source>
    </source>
</evidence>
<evidence type="ECO:0000269" key="5">
    <source>
    </source>
</evidence>
<evidence type="ECO:0000269" key="6">
    <source>
    </source>
</evidence>
<evidence type="ECO:0000269" key="7">
    <source>
    </source>
</evidence>
<evidence type="ECO:0000269" key="8">
    <source>
    </source>
</evidence>
<evidence type="ECO:0000303" key="9">
    <source>
    </source>
</evidence>
<evidence type="ECO:0000303" key="10">
    <source ref="5"/>
</evidence>
<evidence type="ECO:0000305" key="11"/>
<evidence type="ECO:0007744" key="12">
    <source>
    </source>
</evidence>
<evidence type="ECO:0007744" key="13">
    <source>
    </source>
</evidence>
<evidence type="ECO:0007744" key="14">
    <source>
    </source>
</evidence>
<evidence type="ECO:0007744" key="15">
    <source>
    </source>
</evidence>
<evidence type="ECO:0007744" key="16">
    <source>
    </source>
</evidence>
<evidence type="ECO:0007829" key="17">
    <source>
        <dbReference type="PDB" id="5BS7"/>
    </source>
</evidence>
<proteinExistence type="evidence at protein level"/>
<dbReference type="EMBL" id="AL834393">
    <property type="protein sequence ID" value="CAD39055.1"/>
    <property type="molecule type" value="mRNA"/>
</dbReference>
<dbReference type="EMBL" id="BX538046">
    <property type="protein sequence ID" value="CAD97985.1"/>
    <property type="molecule type" value="mRNA"/>
</dbReference>
<dbReference type="EMBL" id="BX641102">
    <property type="protein sequence ID" value="CAE46047.1"/>
    <property type="molecule type" value="mRNA"/>
</dbReference>
<dbReference type="EMBL" id="BX648114">
    <property type="protein sequence ID" value="CAH10772.1"/>
    <property type="molecule type" value="mRNA"/>
</dbReference>
<dbReference type="EMBL" id="CR749626">
    <property type="protein sequence ID" value="CAH18420.1"/>
    <property type="molecule type" value="mRNA"/>
</dbReference>
<dbReference type="EMBL" id="AC112694">
    <property type="status" value="NOT_ANNOTATED_CDS"/>
    <property type="molecule type" value="Genomic_DNA"/>
</dbReference>
<dbReference type="EMBL" id="BC036844">
    <property type="protein sequence ID" value="AAH36844.1"/>
    <property type="molecule type" value="mRNA"/>
</dbReference>
<dbReference type="EMBL" id="BC056261">
    <property type="protein sequence ID" value="AAH56261.1"/>
    <property type="molecule type" value="mRNA"/>
</dbReference>
<dbReference type="EMBL" id="AK096760">
    <property type="protein sequence ID" value="BAC04858.1"/>
    <property type="molecule type" value="mRNA"/>
</dbReference>
<dbReference type="EMBL" id="AF452716">
    <property type="protein sequence ID" value="AAP13351.1"/>
    <property type="status" value="ALT_INIT"/>
    <property type="molecule type" value="mRNA"/>
</dbReference>
<dbReference type="CCDS" id="CCDS31441.1">
    <molecule id="Q68D10-1"/>
</dbReference>
<dbReference type="RefSeq" id="NP_919261.2">
    <molecule id="Q68D10-1"/>
    <property type="nucleotide sequence ID" value="NM_194285.3"/>
</dbReference>
<dbReference type="PDB" id="5BS7">
    <property type="method" value="X-ray"/>
    <property type="resolution" value="3.30 A"/>
    <property type="chains" value="E/F=571-685"/>
</dbReference>
<dbReference type="PDB" id="5BSA">
    <property type="method" value="X-ray"/>
    <property type="resolution" value="4.61 A"/>
    <property type="chains" value="E/F=571-685"/>
</dbReference>
<dbReference type="PDBsum" id="5BS7"/>
<dbReference type="PDBsum" id="5BSA"/>
<dbReference type="SMR" id="Q68D10"/>
<dbReference type="BioGRID" id="126830">
    <property type="interactions" value="128"/>
</dbReference>
<dbReference type="FunCoup" id="Q68D10">
    <property type="interactions" value="2612"/>
</dbReference>
<dbReference type="IntAct" id="Q68D10">
    <property type="interactions" value="62"/>
</dbReference>
<dbReference type="STRING" id="9606.ENSP00000337991"/>
<dbReference type="GlyGen" id="Q68D10">
    <property type="glycosylation" value="2 sites, 1 N-linked glycan (1 site), 1 O-linked glycan (1 site)"/>
</dbReference>
<dbReference type="iPTMnet" id="Q68D10"/>
<dbReference type="MetOSite" id="Q68D10"/>
<dbReference type="PhosphoSitePlus" id="Q68D10"/>
<dbReference type="BioMuta" id="SPTY2D1"/>
<dbReference type="DMDM" id="296452945"/>
<dbReference type="jPOST" id="Q68D10"/>
<dbReference type="MassIVE" id="Q68D10"/>
<dbReference type="PaxDb" id="9606-ENSP00000337991"/>
<dbReference type="PeptideAtlas" id="Q68D10"/>
<dbReference type="ProteomicsDB" id="66043">
    <molecule id="Q68D10-1"/>
</dbReference>
<dbReference type="ProteomicsDB" id="66044">
    <molecule id="Q68D10-2"/>
</dbReference>
<dbReference type="ProteomicsDB" id="66045">
    <molecule id="Q68D10-3"/>
</dbReference>
<dbReference type="Pumba" id="Q68D10"/>
<dbReference type="Antibodypedia" id="64057">
    <property type="antibodies" value="15 antibodies from 7 providers"/>
</dbReference>
<dbReference type="DNASU" id="144108"/>
<dbReference type="Ensembl" id="ENST00000336349.6">
    <molecule id="Q68D10-1"/>
    <property type="protein sequence ID" value="ENSP00000337991.5"/>
    <property type="gene ID" value="ENSG00000179119.15"/>
</dbReference>
<dbReference type="GeneID" id="144108"/>
<dbReference type="KEGG" id="hsa:144108"/>
<dbReference type="MANE-Select" id="ENST00000336349.6">
    <property type="protein sequence ID" value="ENSP00000337991.5"/>
    <property type="RefSeq nucleotide sequence ID" value="NM_194285.3"/>
    <property type="RefSeq protein sequence ID" value="NP_919261.2"/>
</dbReference>
<dbReference type="UCSC" id="uc001moy.4">
    <molecule id="Q68D10-1"/>
    <property type="organism name" value="human"/>
</dbReference>
<dbReference type="AGR" id="HGNC:26818"/>
<dbReference type="CTD" id="144108"/>
<dbReference type="DisGeNET" id="144108"/>
<dbReference type="GeneCards" id="SPTY2D1"/>
<dbReference type="HGNC" id="HGNC:26818">
    <property type="gene designation" value="SPTY2D1"/>
</dbReference>
<dbReference type="HPA" id="ENSG00000179119">
    <property type="expression patterns" value="Tissue enhanced (bone)"/>
</dbReference>
<dbReference type="neXtProt" id="NX_Q68D10"/>
<dbReference type="OpenTargets" id="ENSG00000179119"/>
<dbReference type="PharmGKB" id="PA142670875"/>
<dbReference type="VEuPathDB" id="HostDB:ENSG00000179119"/>
<dbReference type="eggNOG" id="ENOG502QWHS">
    <property type="taxonomic scope" value="Eukaryota"/>
</dbReference>
<dbReference type="GeneTree" id="ENSGT00940000154133"/>
<dbReference type="HOGENOM" id="CLU_025934_0_0_1"/>
<dbReference type="InParanoid" id="Q68D10"/>
<dbReference type="OMA" id="YRDKEHE"/>
<dbReference type="OrthoDB" id="6259853at2759"/>
<dbReference type="PAN-GO" id="Q68D10">
    <property type="GO annotations" value="7 GO annotations based on evolutionary models"/>
</dbReference>
<dbReference type="PhylomeDB" id="Q68D10"/>
<dbReference type="TreeFam" id="TF350176"/>
<dbReference type="PathwayCommons" id="Q68D10"/>
<dbReference type="SignaLink" id="Q68D10"/>
<dbReference type="BioGRID-ORCS" id="144108">
    <property type="hits" value="12 hits in 1170 CRISPR screens"/>
</dbReference>
<dbReference type="CD-CODE" id="91857CE7">
    <property type="entry name" value="Nucleolus"/>
</dbReference>
<dbReference type="ChiTaRS" id="SPTY2D1">
    <property type="organism name" value="human"/>
</dbReference>
<dbReference type="EvolutionaryTrace" id="Q68D10"/>
<dbReference type="GenomeRNAi" id="144108"/>
<dbReference type="Pharos" id="Q68D10">
    <property type="development level" value="Tdark"/>
</dbReference>
<dbReference type="PRO" id="PR:Q68D10"/>
<dbReference type="Proteomes" id="UP000005640">
    <property type="component" value="Chromosome 11"/>
</dbReference>
<dbReference type="RNAct" id="Q68D10">
    <property type="molecule type" value="protein"/>
</dbReference>
<dbReference type="Bgee" id="ENSG00000179119">
    <property type="expression patterns" value="Expressed in amniotic fluid and 189 other cell types or tissues"/>
</dbReference>
<dbReference type="GO" id="GO:0005730">
    <property type="term" value="C:nucleolus"/>
    <property type="evidence" value="ECO:0000314"/>
    <property type="project" value="HPA"/>
</dbReference>
<dbReference type="GO" id="GO:0005654">
    <property type="term" value="C:nucleoplasm"/>
    <property type="evidence" value="ECO:0000314"/>
    <property type="project" value="HPA"/>
</dbReference>
<dbReference type="GO" id="GO:0003677">
    <property type="term" value="F:DNA binding"/>
    <property type="evidence" value="ECO:0000314"/>
    <property type="project" value="UniProtKB"/>
</dbReference>
<dbReference type="GO" id="GO:0042393">
    <property type="term" value="F:histone binding"/>
    <property type="evidence" value="ECO:0000314"/>
    <property type="project" value="UniProtKB"/>
</dbReference>
<dbReference type="GO" id="GO:0140713">
    <property type="term" value="F:histone chaperone activity"/>
    <property type="evidence" value="ECO:0000315"/>
    <property type="project" value="GO_Central"/>
</dbReference>
<dbReference type="GO" id="GO:0001042">
    <property type="term" value="F:RNA polymerase I core binding"/>
    <property type="evidence" value="ECO:0000250"/>
    <property type="project" value="UniProtKB"/>
</dbReference>
<dbReference type="GO" id="GO:0031507">
    <property type="term" value="P:heterochromatin formation"/>
    <property type="evidence" value="ECO:0000315"/>
    <property type="project" value="GO_Central"/>
</dbReference>
<dbReference type="GO" id="GO:0006334">
    <property type="term" value="P:nucleosome assembly"/>
    <property type="evidence" value="ECO:0000315"/>
    <property type="project" value="UniProtKB"/>
</dbReference>
<dbReference type="GO" id="GO:0006355">
    <property type="term" value="P:regulation of DNA-templated transcription"/>
    <property type="evidence" value="ECO:0000315"/>
    <property type="project" value="UniProtKB"/>
</dbReference>
<dbReference type="GO" id="GO:0006360">
    <property type="term" value="P:transcription by RNA polymerase I"/>
    <property type="evidence" value="ECO:0000318"/>
    <property type="project" value="GO_Central"/>
</dbReference>
<dbReference type="InterPro" id="IPR013256">
    <property type="entry name" value="Chromatin_SPT2"/>
</dbReference>
<dbReference type="InterPro" id="IPR054552">
    <property type="entry name" value="SPT2_N"/>
</dbReference>
<dbReference type="PANTHER" id="PTHR22691:SF8">
    <property type="entry name" value="PROTEIN SPT2 HOMOLOG"/>
    <property type="match status" value="1"/>
</dbReference>
<dbReference type="PANTHER" id="PTHR22691">
    <property type="entry name" value="YEAST SPT2-RELATED"/>
    <property type="match status" value="1"/>
</dbReference>
<dbReference type="Pfam" id="PF08243">
    <property type="entry name" value="SPT2"/>
    <property type="match status" value="1"/>
</dbReference>
<dbReference type="Pfam" id="PF22878">
    <property type="entry name" value="SPT2_N"/>
    <property type="match status" value="1"/>
</dbReference>
<dbReference type="SMART" id="SM00784">
    <property type="entry name" value="SPT2"/>
    <property type="match status" value="1"/>
</dbReference>
<comment type="function">
    <text evidence="1 6">Histone chaperone that stabilizes pre-existing histone tetramers and regulates replication-independent histone exchange on chromatin (PubMed:26109053). Required for normal chromatin refolding in the coding region of transcribed genes, and for the suppression of spurious transcription (PubMed:26109053). Binds DNA and histones and promotes nucleosome assembly (in vitro) (PubMed:23378026, PubMed:26109053). Facilitates formation of tetrameric histone complexes containing histone H3 and H4 (PubMed:26109053). Modulates RNA polymerase 1-mediated transcription (By similarity). Binds DNA, with a preference for branched DNA species, such as Y-form DNA and Holliday junction DNA (PubMed:23378026).</text>
</comment>
<comment type="subunit">
    <text evidence="6 7 8">Interacts with histones (PubMed:23378026). Interacts with a heterotetrameric complex formed by histone H3 and H4, especially when the histone tetramer is not bound to DNA (PubMed:26109053). Interacts with histone H3.3 (PubMed:33857403).</text>
</comment>
<comment type="interaction">
    <interactant intactId="EBI-12018536">
        <id>Q68D10-3</id>
    </interactant>
    <interactant intactId="EBI-16439278">
        <id>Q6FHY5</id>
        <label>MEOX2</label>
    </interactant>
    <organismsDiffer>false</organismsDiffer>
    <experiments>3</experiments>
</comment>
<comment type="subcellular location">
    <subcellularLocation>
        <location evidence="1">Nucleus</location>
        <location evidence="1">Nucleolus</location>
    </subcellularLocation>
</comment>
<comment type="alternative products">
    <event type="alternative splicing"/>
    <isoform>
        <id>Q68D10-1</id>
        <name>1</name>
        <sequence type="displayed"/>
    </isoform>
    <isoform>
        <id>Q68D10-2</id>
        <name>2</name>
        <sequence type="described" ref="VSP_030690"/>
    </isoform>
    <isoform>
        <id>Q68D10-3</id>
        <name>3</name>
        <sequence type="described" ref="VSP_030688 VSP_030689"/>
    </isoform>
</comment>
<comment type="domain">
    <text evidence="6 7">The acidic C-terminal domain mediates interaction with histone H3/H4 complexes.</text>
</comment>
<comment type="miscellaneous">
    <text evidence="7">The histone binding domain can functionally complement the yeast ortholog in regulating histone exchange and suppression of spurious transcription.</text>
</comment>
<comment type="similarity">
    <text evidence="11">Belongs to the SPT2 family.</text>
</comment>
<comment type="sequence caution" evidence="11">
    <conflict type="erroneous initiation">
        <sequence resource="EMBL-CDS" id="AAP13351"/>
    </conflict>
    <text>Extended N-terminus.</text>
</comment>
<accession>Q68D10</accession>
<accession>Q6AWA5</accession>
<accession>Q6MZI5</accession>
<accession>Q7Z390</accession>
<accession>Q7Z470</accession>
<accession>Q86VG8</accession>
<accession>Q8N3E7</accession>
<accession>Q8N417</accession>
<accession>Q8N8I3</accession>
<gene>
    <name type="primary">SPTY2D1</name>
</gene>
<sequence length="685" mass="75599">MDFREILMIASKGQGVNNVPKRYSLAVGPPKKDPKVKGVQSAAVQAFLKRKEEELRRKALEEKRRKEELVKKRIELKHDKKARAMAKRTKDNFHGYNGIPIEEKSKKRQATESHTSQGTDREYEMEEENEFLEYNHAESEQEYEEEQEPPKVESKPKVPLKSAPPPMNFTDLLRLAEKKQFEPVEIKVVKKSEERPMTAEELREREFLERKHRRKKLETDGKLPPTVSKKAPSQKESVGTKLSKGSGDRHPSSKGMPLPHAEKKSRPSMANEKHLALSSSKSMPGERIKAGSGNSSQPSLREGHDKPVFNGAGKPHSSTSSPSVPKTSASRTQKSAVEHKAKKSLSHPSHSRPGPMVTPHNKAKSPGVRQPGSSSSSAPGQPSTGVARPTVSSGPVPRRQNGSSSSGPERSISGSKKPTNDSNPSRRTVSGTCGPGQPASSSGGPGRPISGSVSSARPLGSSRGPGRPVSSPHELRRPVSGLGPPGRSVSGPGRSISGSIPAGRTVSNSVPGRPVSSLGPGQTVSSSGPTIKPKCTVVSETISSKNIISRSSNGQMNGMKPPLSGYRAAQGPQRLPFPTGYKRQREYEEEDDDDDEYDSEMEDFIEDEGEPQEEISKHIREIFGYDRKKYKDESDYALRYMESSWKEQQKEEAKSLRLGMQEDLEEMRREEEEMQRRRAKKLKRR</sequence>
<keyword id="KW-0002">3D-structure</keyword>
<keyword id="KW-0007">Acetylation</keyword>
<keyword id="KW-0025">Alternative splicing</keyword>
<keyword id="KW-0175">Coiled coil</keyword>
<keyword id="KW-0238">DNA-binding</keyword>
<keyword id="KW-1017">Isopeptide bond</keyword>
<keyword id="KW-0539">Nucleus</keyword>
<keyword id="KW-0597">Phosphoprotein</keyword>
<keyword id="KW-1267">Proteomics identification</keyword>
<keyword id="KW-1185">Reference proteome</keyword>
<keyword id="KW-0804">Transcription</keyword>
<keyword id="KW-0805">Transcription regulation</keyword>
<keyword id="KW-0832">Ubl conjugation</keyword>